<dbReference type="EMBL" id="CP000325">
    <property type="protein sequence ID" value="ABL05666.1"/>
    <property type="molecule type" value="Genomic_DNA"/>
</dbReference>
<dbReference type="RefSeq" id="WP_011741272.1">
    <property type="nucleotide sequence ID" value="NC_008611.1"/>
</dbReference>
<dbReference type="SMR" id="A0PTJ7"/>
<dbReference type="GeneID" id="93437253"/>
<dbReference type="KEGG" id="mul:MUL_3511"/>
<dbReference type="eggNOG" id="COG2001">
    <property type="taxonomic scope" value="Bacteria"/>
</dbReference>
<dbReference type="HOGENOM" id="CLU_107907_0_5_11"/>
<dbReference type="Proteomes" id="UP000000765">
    <property type="component" value="Chromosome"/>
</dbReference>
<dbReference type="GO" id="GO:0005737">
    <property type="term" value="C:cytoplasm"/>
    <property type="evidence" value="ECO:0007669"/>
    <property type="project" value="UniProtKB-UniRule"/>
</dbReference>
<dbReference type="GO" id="GO:0009295">
    <property type="term" value="C:nucleoid"/>
    <property type="evidence" value="ECO:0007669"/>
    <property type="project" value="UniProtKB-SubCell"/>
</dbReference>
<dbReference type="GO" id="GO:0003700">
    <property type="term" value="F:DNA-binding transcription factor activity"/>
    <property type="evidence" value="ECO:0007669"/>
    <property type="project" value="UniProtKB-UniRule"/>
</dbReference>
<dbReference type="GO" id="GO:0000976">
    <property type="term" value="F:transcription cis-regulatory region binding"/>
    <property type="evidence" value="ECO:0007669"/>
    <property type="project" value="TreeGrafter"/>
</dbReference>
<dbReference type="GO" id="GO:2000143">
    <property type="term" value="P:negative regulation of DNA-templated transcription initiation"/>
    <property type="evidence" value="ECO:0007669"/>
    <property type="project" value="TreeGrafter"/>
</dbReference>
<dbReference type="CDD" id="cd16321">
    <property type="entry name" value="MraZ_C"/>
    <property type="match status" value="1"/>
</dbReference>
<dbReference type="CDD" id="cd16320">
    <property type="entry name" value="MraZ_N"/>
    <property type="match status" value="1"/>
</dbReference>
<dbReference type="FunFam" id="3.40.1550.20:FF:000004">
    <property type="entry name" value="Transcriptional regulator MraZ"/>
    <property type="match status" value="1"/>
</dbReference>
<dbReference type="Gene3D" id="3.40.1550.20">
    <property type="entry name" value="Transcriptional regulator MraZ domain"/>
    <property type="match status" value="1"/>
</dbReference>
<dbReference type="HAMAP" id="MF_01008">
    <property type="entry name" value="MraZ"/>
    <property type="match status" value="1"/>
</dbReference>
<dbReference type="InterPro" id="IPR003444">
    <property type="entry name" value="MraZ"/>
</dbReference>
<dbReference type="InterPro" id="IPR035644">
    <property type="entry name" value="MraZ_C"/>
</dbReference>
<dbReference type="InterPro" id="IPR020603">
    <property type="entry name" value="MraZ_dom"/>
</dbReference>
<dbReference type="InterPro" id="IPR035642">
    <property type="entry name" value="MraZ_N"/>
</dbReference>
<dbReference type="InterPro" id="IPR038619">
    <property type="entry name" value="MraZ_sf"/>
</dbReference>
<dbReference type="InterPro" id="IPR007159">
    <property type="entry name" value="SpoVT-AbrB_dom"/>
</dbReference>
<dbReference type="InterPro" id="IPR037914">
    <property type="entry name" value="SpoVT-AbrB_sf"/>
</dbReference>
<dbReference type="NCBIfam" id="TIGR00242">
    <property type="entry name" value="division/cell wall cluster transcriptional repressor MraZ"/>
    <property type="match status" value="1"/>
</dbReference>
<dbReference type="PANTHER" id="PTHR34701">
    <property type="entry name" value="TRANSCRIPTIONAL REGULATOR MRAZ"/>
    <property type="match status" value="1"/>
</dbReference>
<dbReference type="PANTHER" id="PTHR34701:SF1">
    <property type="entry name" value="TRANSCRIPTIONAL REGULATOR MRAZ"/>
    <property type="match status" value="1"/>
</dbReference>
<dbReference type="Pfam" id="PF02381">
    <property type="entry name" value="MraZ"/>
    <property type="match status" value="2"/>
</dbReference>
<dbReference type="SUPFAM" id="SSF89447">
    <property type="entry name" value="AbrB/MazE/MraZ-like"/>
    <property type="match status" value="1"/>
</dbReference>
<dbReference type="PROSITE" id="PS51740">
    <property type="entry name" value="SPOVT_ABRB"/>
    <property type="match status" value="2"/>
</dbReference>
<reference key="1">
    <citation type="journal article" date="2007" name="Genome Res.">
        <title>Reductive evolution and niche adaptation inferred from the genome of Mycobacterium ulcerans, the causative agent of Buruli ulcer.</title>
        <authorList>
            <person name="Stinear T.P."/>
            <person name="Seemann T."/>
            <person name="Pidot S."/>
            <person name="Frigui W."/>
            <person name="Reysset G."/>
            <person name="Garnier T."/>
            <person name="Meurice G."/>
            <person name="Simon D."/>
            <person name="Bouchier C."/>
            <person name="Ma L."/>
            <person name="Tichit M."/>
            <person name="Porter J.L."/>
            <person name="Ryan J."/>
            <person name="Johnson P.D.R."/>
            <person name="Davies J.K."/>
            <person name="Jenkin G.A."/>
            <person name="Small P.L.C."/>
            <person name="Jones L.M."/>
            <person name="Tekaia F."/>
            <person name="Laval F."/>
            <person name="Daffe M."/>
            <person name="Parkhill J."/>
            <person name="Cole S.T."/>
        </authorList>
    </citation>
    <scope>NUCLEOTIDE SEQUENCE [LARGE SCALE GENOMIC DNA]</scope>
    <source>
        <strain>Agy99</strain>
    </source>
</reference>
<protein>
    <recommendedName>
        <fullName>Transcriptional regulator MraZ</fullName>
    </recommendedName>
</protein>
<proteinExistence type="inferred from homology"/>
<feature type="chain" id="PRO_1000062903" description="Transcriptional regulator MraZ">
    <location>
        <begin position="1"/>
        <end position="143"/>
    </location>
</feature>
<feature type="domain" description="SpoVT-AbrB 1" evidence="2">
    <location>
        <begin position="5"/>
        <end position="47"/>
    </location>
</feature>
<feature type="domain" description="SpoVT-AbrB 2" evidence="2">
    <location>
        <begin position="76"/>
        <end position="119"/>
    </location>
</feature>
<evidence type="ECO:0000255" key="1">
    <source>
        <dbReference type="HAMAP-Rule" id="MF_01008"/>
    </source>
</evidence>
<evidence type="ECO:0000255" key="2">
    <source>
        <dbReference type="PROSITE-ProRule" id="PRU01076"/>
    </source>
</evidence>
<gene>
    <name evidence="1" type="primary">mraZ</name>
    <name type="ordered locus">MUL_3511</name>
</gene>
<name>MRAZ_MYCUA</name>
<sequence>MFLGTYTPKLDDKGRLTLPAKFRDALAGGLMVTKSQDHSLAVYPRSEFEQLARRASKAPRSNPEARAFLRNLAAGTDEQHPDSQGRITLSADHRRYAGLTKDCVVIGAVDYLEIWDAQAWHEYQQLHEENFSAASDEALGDIF</sequence>
<organism>
    <name type="scientific">Mycobacterium ulcerans (strain Agy99)</name>
    <dbReference type="NCBI Taxonomy" id="362242"/>
    <lineage>
        <taxon>Bacteria</taxon>
        <taxon>Bacillati</taxon>
        <taxon>Actinomycetota</taxon>
        <taxon>Actinomycetes</taxon>
        <taxon>Mycobacteriales</taxon>
        <taxon>Mycobacteriaceae</taxon>
        <taxon>Mycobacterium</taxon>
        <taxon>Mycobacterium ulcerans group</taxon>
    </lineage>
</organism>
<comment type="subunit">
    <text evidence="1">Forms oligomers.</text>
</comment>
<comment type="subcellular location">
    <subcellularLocation>
        <location evidence="1">Cytoplasm</location>
        <location evidence="1">Nucleoid</location>
    </subcellularLocation>
</comment>
<comment type="similarity">
    <text evidence="1">Belongs to the MraZ family.</text>
</comment>
<accession>A0PTJ7</accession>
<keyword id="KW-0963">Cytoplasm</keyword>
<keyword id="KW-0238">DNA-binding</keyword>
<keyword id="KW-0677">Repeat</keyword>
<keyword id="KW-0804">Transcription</keyword>
<keyword id="KW-0805">Transcription regulation</keyword>